<gene>
    <name evidence="1" type="primary">rpmI</name>
    <name evidence="1" type="synonym">rpl35</name>
    <name type="ordered locus">Npun_R4938</name>
</gene>
<reference key="1">
    <citation type="journal article" date="2013" name="Plant Physiol.">
        <title>A Nostoc punctiforme Sugar Transporter Necessary to Establish a Cyanobacterium-Plant Symbiosis.</title>
        <authorList>
            <person name="Ekman M."/>
            <person name="Picossi S."/>
            <person name="Campbell E.L."/>
            <person name="Meeks J.C."/>
            <person name="Flores E."/>
        </authorList>
    </citation>
    <scope>NUCLEOTIDE SEQUENCE [LARGE SCALE GENOMIC DNA]</scope>
    <source>
        <strain>ATCC 29133 / PCC 73102</strain>
    </source>
</reference>
<comment type="similarity">
    <text evidence="1">Belongs to the bacterial ribosomal protein bL35 family.</text>
</comment>
<dbReference type="EMBL" id="CP001037">
    <property type="protein sequence ID" value="ACC83283.1"/>
    <property type="molecule type" value="Genomic_DNA"/>
</dbReference>
<dbReference type="RefSeq" id="WP_012411238.1">
    <property type="nucleotide sequence ID" value="NC_010628.1"/>
</dbReference>
<dbReference type="SMR" id="B2J0D1"/>
<dbReference type="STRING" id="63737.Npun_R4938"/>
<dbReference type="EnsemblBacteria" id="ACC83283">
    <property type="protein sequence ID" value="ACC83283"/>
    <property type="gene ID" value="Npun_R4938"/>
</dbReference>
<dbReference type="KEGG" id="npu:Npun_R4938"/>
<dbReference type="eggNOG" id="COG0291">
    <property type="taxonomic scope" value="Bacteria"/>
</dbReference>
<dbReference type="HOGENOM" id="CLU_169643_4_0_3"/>
<dbReference type="OrthoDB" id="47476at2"/>
<dbReference type="PhylomeDB" id="B2J0D1"/>
<dbReference type="Proteomes" id="UP000001191">
    <property type="component" value="Chromosome"/>
</dbReference>
<dbReference type="GO" id="GO:0022625">
    <property type="term" value="C:cytosolic large ribosomal subunit"/>
    <property type="evidence" value="ECO:0007669"/>
    <property type="project" value="TreeGrafter"/>
</dbReference>
<dbReference type="GO" id="GO:0003735">
    <property type="term" value="F:structural constituent of ribosome"/>
    <property type="evidence" value="ECO:0007669"/>
    <property type="project" value="InterPro"/>
</dbReference>
<dbReference type="GO" id="GO:0006412">
    <property type="term" value="P:translation"/>
    <property type="evidence" value="ECO:0007669"/>
    <property type="project" value="UniProtKB-UniRule"/>
</dbReference>
<dbReference type="FunFam" id="4.10.410.60:FF:000001">
    <property type="entry name" value="50S ribosomal protein L35"/>
    <property type="match status" value="1"/>
</dbReference>
<dbReference type="Gene3D" id="4.10.410.60">
    <property type="match status" value="1"/>
</dbReference>
<dbReference type="HAMAP" id="MF_00514">
    <property type="entry name" value="Ribosomal_bL35"/>
    <property type="match status" value="1"/>
</dbReference>
<dbReference type="InterPro" id="IPR001706">
    <property type="entry name" value="Ribosomal_bL35"/>
</dbReference>
<dbReference type="InterPro" id="IPR021137">
    <property type="entry name" value="Ribosomal_bL35-like"/>
</dbReference>
<dbReference type="InterPro" id="IPR018265">
    <property type="entry name" value="Ribosomal_bL35_CS"/>
</dbReference>
<dbReference type="InterPro" id="IPR037229">
    <property type="entry name" value="Ribosomal_bL35_sf"/>
</dbReference>
<dbReference type="NCBIfam" id="TIGR00001">
    <property type="entry name" value="rpmI_bact"/>
    <property type="match status" value="1"/>
</dbReference>
<dbReference type="PANTHER" id="PTHR33343">
    <property type="entry name" value="54S RIBOSOMAL PROTEIN BL35M"/>
    <property type="match status" value="1"/>
</dbReference>
<dbReference type="PANTHER" id="PTHR33343:SF1">
    <property type="entry name" value="LARGE RIBOSOMAL SUBUNIT PROTEIN BL35M"/>
    <property type="match status" value="1"/>
</dbReference>
<dbReference type="Pfam" id="PF01632">
    <property type="entry name" value="Ribosomal_L35p"/>
    <property type="match status" value="1"/>
</dbReference>
<dbReference type="PRINTS" id="PR00064">
    <property type="entry name" value="RIBOSOMALL35"/>
</dbReference>
<dbReference type="SUPFAM" id="SSF143034">
    <property type="entry name" value="L35p-like"/>
    <property type="match status" value="1"/>
</dbReference>
<dbReference type="PROSITE" id="PS00936">
    <property type="entry name" value="RIBOSOMAL_L35"/>
    <property type="match status" value="1"/>
</dbReference>
<sequence length="65" mass="7502">MPKLKTRKAAAKRFRATGTGKIVRRKAGKSHLLEHKSSDKKRSMSKTTLVHERDELNVRLMLPYL</sequence>
<organism>
    <name type="scientific">Nostoc punctiforme (strain ATCC 29133 / PCC 73102)</name>
    <dbReference type="NCBI Taxonomy" id="63737"/>
    <lineage>
        <taxon>Bacteria</taxon>
        <taxon>Bacillati</taxon>
        <taxon>Cyanobacteriota</taxon>
        <taxon>Cyanophyceae</taxon>
        <taxon>Nostocales</taxon>
        <taxon>Nostocaceae</taxon>
        <taxon>Nostoc</taxon>
    </lineage>
</organism>
<keyword id="KW-1185">Reference proteome</keyword>
<keyword id="KW-0687">Ribonucleoprotein</keyword>
<keyword id="KW-0689">Ribosomal protein</keyword>
<accession>B2J0D1</accession>
<feature type="chain" id="PRO_1000127383" description="Large ribosomal subunit protein bL35">
    <location>
        <begin position="1"/>
        <end position="65"/>
    </location>
</feature>
<feature type="region of interest" description="Disordered" evidence="2">
    <location>
        <begin position="24"/>
        <end position="48"/>
    </location>
</feature>
<feature type="compositionally biased region" description="Basic and acidic residues" evidence="2">
    <location>
        <begin position="31"/>
        <end position="42"/>
    </location>
</feature>
<proteinExistence type="inferred from homology"/>
<name>RL35_NOSP7</name>
<protein>
    <recommendedName>
        <fullName evidence="1">Large ribosomal subunit protein bL35</fullName>
    </recommendedName>
    <alternativeName>
        <fullName evidence="3">50S ribosomal protein L35</fullName>
    </alternativeName>
</protein>
<evidence type="ECO:0000255" key="1">
    <source>
        <dbReference type="HAMAP-Rule" id="MF_00514"/>
    </source>
</evidence>
<evidence type="ECO:0000256" key="2">
    <source>
        <dbReference type="SAM" id="MobiDB-lite"/>
    </source>
</evidence>
<evidence type="ECO:0000305" key="3"/>